<accession>B2S5B8</accession>
<keyword id="KW-0030">Aminoacyl-tRNA synthetase</keyword>
<keyword id="KW-0067">ATP-binding</keyword>
<keyword id="KW-0963">Cytoplasm</keyword>
<keyword id="KW-0436">Ligase</keyword>
<keyword id="KW-0547">Nucleotide-binding</keyword>
<keyword id="KW-0648">Protein biosynthesis</keyword>
<feature type="chain" id="PRO_1000098037" description="Serine--tRNA ligase">
    <location>
        <begin position="1"/>
        <end position="427"/>
    </location>
</feature>
<feature type="binding site" evidence="1">
    <location>
        <begin position="231"/>
        <end position="233"/>
    </location>
    <ligand>
        <name>L-serine</name>
        <dbReference type="ChEBI" id="CHEBI:33384"/>
    </ligand>
</feature>
<feature type="binding site" evidence="1">
    <location>
        <begin position="262"/>
        <end position="264"/>
    </location>
    <ligand>
        <name>ATP</name>
        <dbReference type="ChEBI" id="CHEBI:30616"/>
    </ligand>
</feature>
<feature type="binding site" evidence="1">
    <location>
        <position position="285"/>
    </location>
    <ligand>
        <name>L-serine</name>
        <dbReference type="ChEBI" id="CHEBI:33384"/>
    </ligand>
</feature>
<feature type="binding site" evidence="1">
    <location>
        <begin position="349"/>
        <end position="352"/>
    </location>
    <ligand>
        <name>ATP</name>
        <dbReference type="ChEBI" id="CHEBI:30616"/>
    </ligand>
</feature>
<feature type="binding site" evidence="1">
    <location>
        <position position="385"/>
    </location>
    <ligand>
        <name>L-serine</name>
        <dbReference type="ChEBI" id="CHEBI:33384"/>
    </ligand>
</feature>
<protein>
    <recommendedName>
        <fullName evidence="1">Serine--tRNA ligase</fullName>
        <ecNumber evidence="1">6.1.1.11</ecNumber>
    </recommendedName>
    <alternativeName>
        <fullName evidence="1">Seryl-tRNA synthetase</fullName>
        <shortName evidence="1">SerRS</shortName>
    </alternativeName>
    <alternativeName>
        <fullName evidence="1">Seryl-tRNA(Ser/Sec) synthetase</fullName>
    </alternativeName>
</protein>
<sequence length="427" mass="47548">MLDIKWIRENPETLDKALAKRGAAPLSSELIALDEKRREHVGKVQAAQERRNAASKEIGKAMAAKDMGTAEKLKAEVGELKDFLAHAEEDERRLSKELSDALSTIPNIPLDDVPLGKDESDNVELRRIGNPHNFSFQPKEHFELGEALGYMDFERAAKLAGARFTVLKGPLARLERALGQFMLDLHTTEHGYTEVMPPLMVRDEAVYGTGQLPKFSEDLFRTTDGRWLIPTAEVPLTNLVAEEIVDMKGLPLRFTALTPCFRSEAGSAGRDTRGMLRQHQFLKVEMVSITDAESSVAEHERMTACAEEVLKRLGLPFRTVVLCTGDMGFGAQRTYDIEVWLPGQNTYREISSCSTCGDFQGRRMNARYRPEGEKSTRFVHTLNGSGVAVGRALIAVMENYQQEDGSIHIPEALQPYMGGLTRIEKAA</sequence>
<dbReference type="EC" id="6.1.1.11" evidence="1"/>
<dbReference type="EMBL" id="CP000887">
    <property type="protein sequence ID" value="ACD72365.1"/>
    <property type="molecule type" value="Genomic_DNA"/>
</dbReference>
<dbReference type="RefSeq" id="WP_002964015.1">
    <property type="nucleotide sequence ID" value="NC_010742.1"/>
</dbReference>
<dbReference type="SMR" id="B2S5B8"/>
<dbReference type="GeneID" id="97533819"/>
<dbReference type="KEGG" id="bmc:BAbS19_I08440"/>
<dbReference type="HOGENOM" id="CLU_023797_1_1_5"/>
<dbReference type="UniPathway" id="UPA00906">
    <property type="reaction ID" value="UER00895"/>
</dbReference>
<dbReference type="Proteomes" id="UP000002565">
    <property type="component" value="Chromosome 1"/>
</dbReference>
<dbReference type="GO" id="GO:0005737">
    <property type="term" value="C:cytoplasm"/>
    <property type="evidence" value="ECO:0007669"/>
    <property type="project" value="UniProtKB-SubCell"/>
</dbReference>
<dbReference type="GO" id="GO:0005524">
    <property type="term" value="F:ATP binding"/>
    <property type="evidence" value="ECO:0007669"/>
    <property type="project" value="UniProtKB-UniRule"/>
</dbReference>
<dbReference type="GO" id="GO:0004828">
    <property type="term" value="F:serine-tRNA ligase activity"/>
    <property type="evidence" value="ECO:0007669"/>
    <property type="project" value="UniProtKB-UniRule"/>
</dbReference>
<dbReference type="GO" id="GO:0016260">
    <property type="term" value="P:selenocysteine biosynthetic process"/>
    <property type="evidence" value="ECO:0007669"/>
    <property type="project" value="UniProtKB-UniRule"/>
</dbReference>
<dbReference type="GO" id="GO:0006434">
    <property type="term" value="P:seryl-tRNA aminoacylation"/>
    <property type="evidence" value="ECO:0007669"/>
    <property type="project" value="UniProtKB-UniRule"/>
</dbReference>
<dbReference type="CDD" id="cd00770">
    <property type="entry name" value="SerRS_core"/>
    <property type="match status" value="1"/>
</dbReference>
<dbReference type="Gene3D" id="3.30.930.10">
    <property type="entry name" value="Bira Bifunctional Protein, Domain 2"/>
    <property type="match status" value="1"/>
</dbReference>
<dbReference type="Gene3D" id="1.10.287.40">
    <property type="entry name" value="Serine-tRNA synthetase, tRNA binding domain"/>
    <property type="match status" value="1"/>
</dbReference>
<dbReference type="HAMAP" id="MF_00176">
    <property type="entry name" value="Ser_tRNA_synth_type1"/>
    <property type="match status" value="1"/>
</dbReference>
<dbReference type="InterPro" id="IPR002314">
    <property type="entry name" value="aa-tRNA-synt_IIb"/>
</dbReference>
<dbReference type="InterPro" id="IPR006195">
    <property type="entry name" value="aa-tRNA-synth_II"/>
</dbReference>
<dbReference type="InterPro" id="IPR045864">
    <property type="entry name" value="aa-tRNA-synth_II/BPL/LPL"/>
</dbReference>
<dbReference type="InterPro" id="IPR002317">
    <property type="entry name" value="Ser-tRNA-ligase_type_1"/>
</dbReference>
<dbReference type="InterPro" id="IPR015866">
    <property type="entry name" value="Ser-tRNA-synth_1_N"/>
</dbReference>
<dbReference type="InterPro" id="IPR042103">
    <property type="entry name" value="SerRS_1_N_sf"/>
</dbReference>
<dbReference type="InterPro" id="IPR033729">
    <property type="entry name" value="SerRS_core"/>
</dbReference>
<dbReference type="InterPro" id="IPR010978">
    <property type="entry name" value="tRNA-bd_arm"/>
</dbReference>
<dbReference type="NCBIfam" id="TIGR00414">
    <property type="entry name" value="serS"/>
    <property type="match status" value="1"/>
</dbReference>
<dbReference type="PANTHER" id="PTHR43697:SF1">
    <property type="entry name" value="SERINE--TRNA LIGASE"/>
    <property type="match status" value="1"/>
</dbReference>
<dbReference type="PANTHER" id="PTHR43697">
    <property type="entry name" value="SERYL-TRNA SYNTHETASE"/>
    <property type="match status" value="1"/>
</dbReference>
<dbReference type="Pfam" id="PF02403">
    <property type="entry name" value="Seryl_tRNA_N"/>
    <property type="match status" value="1"/>
</dbReference>
<dbReference type="Pfam" id="PF00587">
    <property type="entry name" value="tRNA-synt_2b"/>
    <property type="match status" value="1"/>
</dbReference>
<dbReference type="PIRSF" id="PIRSF001529">
    <property type="entry name" value="Ser-tRNA-synth_IIa"/>
    <property type="match status" value="1"/>
</dbReference>
<dbReference type="PRINTS" id="PR00981">
    <property type="entry name" value="TRNASYNTHSER"/>
</dbReference>
<dbReference type="SUPFAM" id="SSF55681">
    <property type="entry name" value="Class II aaRS and biotin synthetases"/>
    <property type="match status" value="1"/>
</dbReference>
<dbReference type="SUPFAM" id="SSF46589">
    <property type="entry name" value="tRNA-binding arm"/>
    <property type="match status" value="1"/>
</dbReference>
<dbReference type="PROSITE" id="PS50862">
    <property type="entry name" value="AA_TRNA_LIGASE_II"/>
    <property type="match status" value="1"/>
</dbReference>
<comment type="function">
    <text evidence="1">Catalyzes the attachment of serine to tRNA(Ser). Is also able to aminoacylate tRNA(Sec) with serine, to form the misacylated tRNA L-seryl-tRNA(Sec), which will be further converted into selenocysteinyl-tRNA(Sec).</text>
</comment>
<comment type="catalytic activity">
    <reaction evidence="1">
        <text>tRNA(Ser) + L-serine + ATP = L-seryl-tRNA(Ser) + AMP + diphosphate + H(+)</text>
        <dbReference type="Rhea" id="RHEA:12292"/>
        <dbReference type="Rhea" id="RHEA-COMP:9669"/>
        <dbReference type="Rhea" id="RHEA-COMP:9703"/>
        <dbReference type="ChEBI" id="CHEBI:15378"/>
        <dbReference type="ChEBI" id="CHEBI:30616"/>
        <dbReference type="ChEBI" id="CHEBI:33019"/>
        <dbReference type="ChEBI" id="CHEBI:33384"/>
        <dbReference type="ChEBI" id="CHEBI:78442"/>
        <dbReference type="ChEBI" id="CHEBI:78533"/>
        <dbReference type="ChEBI" id="CHEBI:456215"/>
        <dbReference type="EC" id="6.1.1.11"/>
    </reaction>
</comment>
<comment type="catalytic activity">
    <reaction evidence="1">
        <text>tRNA(Sec) + L-serine + ATP = L-seryl-tRNA(Sec) + AMP + diphosphate + H(+)</text>
        <dbReference type="Rhea" id="RHEA:42580"/>
        <dbReference type="Rhea" id="RHEA-COMP:9742"/>
        <dbReference type="Rhea" id="RHEA-COMP:10128"/>
        <dbReference type="ChEBI" id="CHEBI:15378"/>
        <dbReference type="ChEBI" id="CHEBI:30616"/>
        <dbReference type="ChEBI" id="CHEBI:33019"/>
        <dbReference type="ChEBI" id="CHEBI:33384"/>
        <dbReference type="ChEBI" id="CHEBI:78442"/>
        <dbReference type="ChEBI" id="CHEBI:78533"/>
        <dbReference type="ChEBI" id="CHEBI:456215"/>
        <dbReference type="EC" id="6.1.1.11"/>
    </reaction>
</comment>
<comment type="pathway">
    <text evidence="1">Aminoacyl-tRNA biosynthesis; selenocysteinyl-tRNA(Sec) biosynthesis; L-seryl-tRNA(Sec) from L-serine and tRNA(Sec): step 1/1.</text>
</comment>
<comment type="subunit">
    <text evidence="1">Homodimer. The tRNA molecule binds across the dimer.</text>
</comment>
<comment type="subcellular location">
    <subcellularLocation>
        <location evidence="1">Cytoplasm</location>
    </subcellularLocation>
</comment>
<comment type="domain">
    <text evidence="1">Consists of two distinct domains, a catalytic core and a N-terminal extension that is involved in tRNA binding.</text>
</comment>
<comment type="similarity">
    <text evidence="1">Belongs to the class-II aminoacyl-tRNA synthetase family. Type-1 seryl-tRNA synthetase subfamily.</text>
</comment>
<gene>
    <name evidence="1" type="primary">serS</name>
    <name type="ordered locus">BAbS19_I08440</name>
</gene>
<evidence type="ECO:0000255" key="1">
    <source>
        <dbReference type="HAMAP-Rule" id="MF_00176"/>
    </source>
</evidence>
<proteinExistence type="inferred from homology"/>
<reference key="1">
    <citation type="journal article" date="2008" name="PLoS ONE">
        <title>Genome sequence of Brucella abortus vaccine strain S19 compared to virulent strains yields candidate virulence genes.</title>
        <authorList>
            <person name="Crasta O.R."/>
            <person name="Folkerts O."/>
            <person name="Fei Z."/>
            <person name="Mane S.P."/>
            <person name="Evans C."/>
            <person name="Martino-Catt S."/>
            <person name="Bricker B."/>
            <person name="Yu G."/>
            <person name="Du L."/>
            <person name="Sobral B.W."/>
        </authorList>
    </citation>
    <scope>NUCLEOTIDE SEQUENCE [LARGE SCALE GENOMIC DNA]</scope>
    <source>
        <strain>S19</strain>
    </source>
</reference>
<organism>
    <name type="scientific">Brucella abortus (strain S19)</name>
    <dbReference type="NCBI Taxonomy" id="430066"/>
    <lineage>
        <taxon>Bacteria</taxon>
        <taxon>Pseudomonadati</taxon>
        <taxon>Pseudomonadota</taxon>
        <taxon>Alphaproteobacteria</taxon>
        <taxon>Hyphomicrobiales</taxon>
        <taxon>Brucellaceae</taxon>
        <taxon>Brucella/Ochrobactrum group</taxon>
        <taxon>Brucella</taxon>
    </lineage>
</organism>
<name>SYS_BRUA1</name>